<name>PSBK_SILLA</name>
<keyword id="KW-0150">Chloroplast</keyword>
<keyword id="KW-0472">Membrane</keyword>
<keyword id="KW-0602">Photosynthesis</keyword>
<keyword id="KW-0604">Photosystem II</keyword>
<keyword id="KW-0934">Plastid</keyword>
<keyword id="KW-0674">Reaction center</keyword>
<keyword id="KW-0793">Thylakoid</keyword>
<keyword id="KW-0812">Transmembrane</keyword>
<keyword id="KW-1133">Transmembrane helix</keyword>
<proteinExistence type="inferred from homology"/>
<comment type="function">
    <text evidence="1">One of the components of the core complex of photosystem II (PSII). PSII is a light-driven water:plastoquinone oxidoreductase that uses light energy to abstract electrons from H(2)O, generating O(2) and a proton gradient subsequently used for ATP formation. It consists of a core antenna complex that captures photons, and an electron transfer chain that converts photonic excitation into a charge separation.</text>
</comment>
<comment type="subunit">
    <text evidence="1">PSII is composed of 1 copy each of membrane proteins PsbA, PsbB, PsbC, PsbD, PsbE, PsbF, PsbH, PsbI, PsbJ, PsbK, PsbL, PsbM, PsbT, PsbX, PsbY, PsbZ, Psb30/Ycf12, at least 3 peripheral proteins of the oxygen-evolving complex and a large number of cofactors. It forms dimeric complexes.</text>
</comment>
<comment type="subcellular location">
    <subcellularLocation>
        <location evidence="1">Plastid</location>
        <location evidence="1">Chloroplast thylakoid membrane</location>
        <topology evidence="1">Single-pass membrane protein</topology>
    </subcellularLocation>
</comment>
<comment type="similarity">
    <text evidence="1">Belongs to the PsbK family.</text>
</comment>
<protein>
    <recommendedName>
        <fullName evidence="1">Photosystem II reaction center protein K</fullName>
        <shortName evidence="1">PSII-K</shortName>
    </recommendedName>
</protein>
<reference key="1">
    <citation type="submission" date="2004-08" db="EMBL/GenBank/DDBJ databases">
        <title>A partial chloroplast genome of Silene latifolia.</title>
        <authorList>
            <person name="Kejnovsky E."/>
            <person name="Kubat Z."/>
            <person name="Hobza R."/>
            <person name="Lengerova M."/>
            <person name="Sato S."/>
            <person name="Tabata S."/>
            <person name="Fukui K."/>
            <person name="Matsunaga S."/>
            <person name="Vyskot B."/>
        </authorList>
    </citation>
    <scope>NUCLEOTIDE SEQUENCE [GENOMIC DNA]</scope>
</reference>
<gene>
    <name evidence="1" type="primary">psbK</name>
</gene>
<sequence>MLNIFSLIGLNSALYSSSCFFAKLPEAYAFLSPIVDFMPVIPLLFFLLAFVWQAAVSFR</sequence>
<feature type="propeptide" id="PRO_0000029523" evidence="1">
    <location>
        <begin position="1"/>
        <end position="22"/>
    </location>
</feature>
<feature type="chain" id="PRO_0000029524" description="Photosystem II reaction center protein K" evidence="1">
    <location>
        <begin position="23"/>
        <end position="59"/>
    </location>
</feature>
<feature type="transmembrane region" description="Helical" evidence="1">
    <location>
        <begin position="30"/>
        <end position="50"/>
    </location>
</feature>
<accession>Q589B1</accession>
<organism>
    <name type="scientific">Silene latifolia</name>
    <name type="common">White campion</name>
    <name type="synonym">Bladder campion</name>
    <dbReference type="NCBI Taxonomy" id="37657"/>
    <lineage>
        <taxon>Eukaryota</taxon>
        <taxon>Viridiplantae</taxon>
        <taxon>Streptophyta</taxon>
        <taxon>Embryophyta</taxon>
        <taxon>Tracheophyta</taxon>
        <taxon>Spermatophyta</taxon>
        <taxon>Magnoliopsida</taxon>
        <taxon>eudicotyledons</taxon>
        <taxon>Gunneridae</taxon>
        <taxon>Pentapetalae</taxon>
        <taxon>Caryophyllales</taxon>
        <taxon>Caryophyllaceae</taxon>
        <taxon>Sileneae</taxon>
        <taxon>Silene</taxon>
        <taxon>Silene subgen. Behenantha</taxon>
        <taxon>Silene sect. Melandrium</taxon>
    </lineage>
</organism>
<dbReference type="EMBL" id="AB189069">
    <property type="protein sequence ID" value="BAD93466.1"/>
    <property type="molecule type" value="Genomic_DNA"/>
</dbReference>
<dbReference type="RefSeq" id="YP_005089560.1">
    <property type="nucleotide sequence ID" value="NC_016730.1"/>
</dbReference>
<dbReference type="SMR" id="Q589B1"/>
<dbReference type="GeneID" id="11541166"/>
<dbReference type="GO" id="GO:0009535">
    <property type="term" value="C:chloroplast thylakoid membrane"/>
    <property type="evidence" value="ECO:0007669"/>
    <property type="project" value="UniProtKB-SubCell"/>
</dbReference>
<dbReference type="GO" id="GO:0009539">
    <property type="term" value="C:photosystem II reaction center"/>
    <property type="evidence" value="ECO:0007669"/>
    <property type="project" value="InterPro"/>
</dbReference>
<dbReference type="GO" id="GO:0015979">
    <property type="term" value="P:photosynthesis"/>
    <property type="evidence" value="ECO:0007669"/>
    <property type="project" value="UniProtKB-UniRule"/>
</dbReference>
<dbReference type="HAMAP" id="MF_00441">
    <property type="entry name" value="PSII_PsbK"/>
    <property type="match status" value="1"/>
</dbReference>
<dbReference type="InterPro" id="IPR003687">
    <property type="entry name" value="PSII_PsbK"/>
</dbReference>
<dbReference type="InterPro" id="IPR037270">
    <property type="entry name" value="PSII_PsbK_sf"/>
</dbReference>
<dbReference type="NCBIfam" id="NF002715">
    <property type="entry name" value="PRK02553.1"/>
    <property type="match status" value="1"/>
</dbReference>
<dbReference type="PANTHER" id="PTHR35325">
    <property type="match status" value="1"/>
</dbReference>
<dbReference type="PANTHER" id="PTHR35325:SF1">
    <property type="entry name" value="PHOTOSYSTEM II REACTION CENTER PROTEIN K"/>
    <property type="match status" value="1"/>
</dbReference>
<dbReference type="Pfam" id="PF02533">
    <property type="entry name" value="PsbK"/>
    <property type="match status" value="1"/>
</dbReference>
<dbReference type="SUPFAM" id="SSF161037">
    <property type="entry name" value="Photosystem II reaction center protein K, PsbK"/>
    <property type="match status" value="1"/>
</dbReference>
<evidence type="ECO:0000255" key="1">
    <source>
        <dbReference type="HAMAP-Rule" id="MF_00441"/>
    </source>
</evidence>
<geneLocation type="chloroplast"/>